<proteinExistence type="inferred from homology"/>
<evidence type="ECO:0000255" key="1">
    <source>
        <dbReference type="HAMAP-Rule" id="MF_01149"/>
    </source>
</evidence>
<reference key="1">
    <citation type="submission" date="2008-02" db="EMBL/GenBank/DDBJ databases">
        <title>Complete sequence of Escherichia coli C str. ATCC 8739.</title>
        <authorList>
            <person name="Copeland A."/>
            <person name="Lucas S."/>
            <person name="Lapidus A."/>
            <person name="Glavina del Rio T."/>
            <person name="Dalin E."/>
            <person name="Tice H."/>
            <person name="Bruce D."/>
            <person name="Goodwin L."/>
            <person name="Pitluck S."/>
            <person name="Kiss H."/>
            <person name="Brettin T."/>
            <person name="Detter J.C."/>
            <person name="Han C."/>
            <person name="Kuske C.R."/>
            <person name="Schmutz J."/>
            <person name="Larimer F."/>
            <person name="Land M."/>
            <person name="Hauser L."/>
            <person name="Kyrpides N."/>
            <person name="Mikhailova N."/>
            <person name="Ingram L."/>
            <person name="Richardson P."/>
        </authorList>
    </citation>
    <scope>NUCLEOTIDE SEQUENCE [LARGE SCALE GENOMIC DNA]</scope>
    <source>
        <strain>ATCC 8739 / DSM 1576 / NBRC 3972 / NCIMB 8545 / WDCM 00012 / Crooks</strain>
    </source>
</reference>
<comment type="subcellular location">
    <subcellularLocation>
        <location evidence="1">Cell inner membrane</location>
        <topology evidence="1">Multi-pass membrane protein</topology>
    </subcellularLocation>
</comment>
<comment type="similarity">
    <text evidence="1">Belongs to the major facilitator superfamily. YcaD (TC 2.A.1.26) family.</text>
</comment>
<gene>
    <name evidence="1" type="primary">ycaD</name>
    <name type="ordered locus">EcolC_2698</name>
</gene>
<dbReference type="EMBL" id="CP000946">
    <property type="protein sequence ID" value="ACA78327.1"/>
    <property type="molecule type" value="Genomic_DNA"/>
</dbReference>
<dbReference type="RefSeq" id="WP_000109259.1">
    <property type="nucleotide sequence ID" value="NZ_MTFT01000009.1"/>
</dbReference>
<dbReference type="SMR" id="B1IW33"/>
<dbReference type="KEGG" id="ecl:EcolC_2698"/>
<dbReference type="HOGENOM" id="CLU_035018_1_2_6"/>
<dbReference type="GO" id="GO:0005886">
    <property type="term" value="C:plasma membrane"/>
    <property type="evidence" value="ECO:0007669"/>
    <property type="project" value="UniProtKB-SubCell"/>
</dbReference>
<dbReference type="GO" id="GO:0022857">
    <property type="term" value="F:transmembrane transporter activity"/>
    <property type="evidence" value="ECO:0007669"/>
    <property type="project" value="UniProtKB-UniRule"/>
</dbReference>
<dbReference type="CDD" id="cd17477">
    <property type="entry name" value="MFS_YcaD_like"/>
    <property type="match status" value="1"/>
</dbReference>
<dbReference type="FunFam" id="1.20.1250.20:FF:000041">
    <property type="entry name" value="Uncharacterized MFS-type transporter YcaD"/>
    <property type="match status" value="1"/>
</dbReference>
<dbReference type="FunFam" id="1.20.1250.20:FF:000066">
    <property type="entry name" value="Uncharacterized MFS-type transporter YcaD"/>
    <property type="match status" value="1"/>
</dbReference>
<dbReference type="Gene3D" id="1.20.1250.20">
    <property type="entry name" value="MFS general substrate transporter like domains"/>
    <property type="match status" value="2"/>
</dbReference>
<dbReference type="HAMAP" id="MF_01149">
    <property type="entry name" value="MFS_YcaD"/>
    <property type="match status" value="1"/>
</dbReference>
<dbReference type="InterPro" id="IPR011701">
    <property type="entry name" value="MFS"/>
</dbReference>
<dbReference type="InterPro" id="IPR020846">
    <property type="entry name" value="MFS_dom"/>
</dbReference>
<dbReference type="InterPro" id="IPR036259">
    <property type="entry name" value="MFS_trans_sf"/>
</dbReference>
<dbReference type="InterPro" id="IPR023745">
    <property type="entry name" value="MFS_YcaD"/>
</dbReference>
<dbReference type="InterPro" id="IPR047200">
    <property type="entry name" value="MFS_YcaD-like"/>
</dbReference>
<dbReference type="NCBIfam" id="NF002962">
    <property type="entry name" value="PRK03633.1"/>
    <property type="match status" value="1"/>
</dbReference>
<dbReference type="PANTHER" id="PTHR23521">
    <property type="entry name" value="TRANSPORTER MFS SUPERFAMILY"/>
    <property type="match status" value="1"/>
</dbReference>
<dbReference type="PANTHER" id="PTHR23521:SF2">
    <property type="entry name" value="TRANSPORTER MFS SUPERFAMILY"/>
    <property type="match status" value="1"/>
</dbReference>
<dbReference type="Pfam" id="PF07690">
    <property type="entry name" value="MFS_1"/>
    <property type="match status" value="1"/>
</dbReference>
<dbReference type="SUPFAM" id="SSF103473">
    <property type="entry name" value="MFS general substrate transporter"/>
    <property type="match status" value="1"/>
</dbReference>
<dbReference type="PROSITE" id="PS50850">
    <property type="entry name" value="MFS"/>
    <property type="match status" value="1"/>
</dbReference>
<name>YCAD_ECOLC</name>
<accession>B1IW33</accession>
<organism>
    <name type="scientific">Escherichia coli (strain ATCC 8739 / DSM 1576 / NBRC 3972 / NCIMB 8545 / WDCM 00012 / Crooks)</name>
    <dbReference type="NCBI Taxonomy" id="481805"/>
    <lineage>
        <taxon>Bacteria</taxon>
        <taxon>Pseudomonadati</taxon>
        <taxon>Pseudomonadota</taxon>
        <taxon>Gammaproteobacteria</taxon>
        <taxon>Enterobacterales</taxon>
        <taxon>Enterobacteriaceae</taxon>
        <taxon>Escherichia</taxon>
    </lineage>
</organism>
<protein>
    <recommendedName>
        <fullName evidence="1">Uncharacterized MFS-type transporter YcaD</fullName>
    </recommendedName>
</protein>
<keyword id="KW-0997">Cell inner membrane</keyword>
<keyword id="KW-1003">Cell membrane</keyword>
<keyword id="KW-0472">Membrane</keyword>
<keyword id="KW-0812">Transmembrane</keyword>
<keyword id="KW-1133">Transmembrane helix</keyword>
<keyword id="KW-0813">Transport</keyword>
<feature type="chain" id="PRO_1000085094" description="Uncharacterized MFS-type transporter YcaD">
    <location>
        <begin position="1"/>
        <end position="382"/>
    </location>
</feature>
<feature type="transmembrane region" description="Helical" evidence="1">
    <location>
        <begin position="14"/>
        <end position="34"/>
    </location>
</feature>
<feature type="transmembrane region" description="Helical" evidence="1">
    <location>
        <begin position="45"/>
        <end position="65"/>
    </location>
</feature>
<feature type="transmembrane region" description="Helical" evidence="1">
    <location>
        <begin position="79"/>
        <end position="99"/>
    </location>
</feature>
<feature type="transmembrane region" description="Helical" evidence="1">
    <location>
        <begin position="102"/>
        <end position="122"/>
    </location>
</feature>
<feature type="transmembrane region" description="Helical" evidence="1">
    <location>
        <begin position="131"/>
        <end position="151"/>
    </location>
</feature>
<feature type="transmembrane region" description="Helical" evidence="1">
    <location>
        <begin position="157"/>
        <end position="177"/>
    </location>
</feature>
<feature type="transmembrane region" description="Helical" evidence="1">
    <location>
        <begin position="204"/>
        <end position="224"/>
    </location>
</feature>
<feature type="transmembrane region" description="Helical" evidence="1">
    <location>
        <begin position="235"/>
        <end position="255"/>
    </location>
</feature>
<feature type="transmembrane region" description="Helical" evidence="1">
    <location>
        <begin position="270"/>
        <end position="290"/>
    </location>
</feature>
<feature type="transmembrane region" description="Helical" evidence="1">
    <location>
        <begin position="291"/>
        <end position="311"/>
    </location>
</feature>
<feature type="transmembrane region" description="Helical" evidence="1">
    <location>
        <begin position="325"/>
        <end position="345"/>
    </location>
</feature>
<feature type="transmembrane region" description="Helical" evidence="1">
    <location>
        <begin position="348"/>
        <end position="368"/>
    </location>
</feature>
<sequence length="382" mass="41432">MSTYTQPVMLLLSGLLLLTLAIAVLNTLVPLWLAQEHMSTWQVGVVSSSYFTGNLVGTLLTGYVIKRIGFNRSYYLASFIFAAGCAGLGLMIGFWSWLAWRFVAGVGCAMIWVVVESALMCSGTSRNRGRLLAAYMMVYYVGTFLGQLLVSKVSTELMSVLPWVTGLTLAGILPLLFTRVLNQQAENHDSTSITSMLKLRQARLGVNGCIISGIVLGSLYGLMPLYLNHKGVSNASIGFWMAVLVSAGILGQWPIGRLADKFGRLLVLRVQVFVVILGSIAMLSQAAMAPALFILGAAGFTLYPVAMAWACEKVEHHQLVAMNQALLLSYTVGSLLGPSFTAMLMQNFSDNLLFIMIASVSFIYLLMLLRNAGHTPKPVAHV</sequence>